<reference key="1">
    <citation type="journal article" date="2004" name="Nature">
        <title>Genome evolution in yeasts.</title>
        <authorList>
            <person name="Dujon B."/>
            <person name="Sherman D."/>
            <person name="Fischer G."/>
            <person name="Durrens P."/>
            <person name="Casaregola S."/>
            <person name="Lafontaine I."/>
            <person name="de Montigny J."/>
            <person name="Marck C."/>
            <person name="Neuveglise C."/>
            <person name="Talla E."/>
            <person name="Goffard N."/>
            <person name="Frangeul L."/>
            <person name="Aigle M."/>
            <person name="Anthouard V."/>
            <person name="Babour A."/>
            <person name="Barbe V."/>
            <person name="Barnay S."/>
            <person name="Blanchin S."/>
            <person name="Beckerich J.-M."/>
            <person name="Beyne E."/>
            <person name="Bleykasten C."/>
            <person name="Boisrame A."/>
            <person name="Boyer J."/>
            <person name="Cattolico L."/>
            <person name="Confanioleri F."/>
            <person name="de Daruvar A."/>
            <person name="Despons L."/>
            <person name="Fabre E."/>
            <person name="Fairhead C."/>
            <person name="Ferry-Dumazet H."/>
            <person name="Groppi A."/>
            <person name="Hantraye F."/>
            <person name="Hennequin C."/>
            <person name="Jauniaux N."/>
            <person name="Joyet P."/>
            <person name="Kachouri R."/>
            <person name="Kerrest A."/>
            <person name="Koszul R."/>
            <person name="Lemaire M."/>
            <person name="Lesur I."/>
            <person name="Ma L."/>
            <person name="Muller H."/>
            <person name="Nicaud J.-M."/>
            <person name="Nikolski M."/>
            <person name="Oztas S."/>
            <person name="Ozier-Kalogeropoulos O."/>
            <person name="Pellenz S."/>
            <person name="Potier S."/>
            <person name="Richard G.-F."/>
            <person name="Straub M.-L."/>
            <person name="Suleau A."/>
            <person name="Swennen D."/>
            <person name="Tekaia F."/>
            <person name="Wesolowski-Louvel M."/>
            <person name="Westhof E."/>
            <person name="Wirth B."/>
            <person name="Zeniou-Meyer M."/>
            <person name="Zivanovic Y."/>
            <person name="Bolotin-Fukuhara M."/>
            <person name="Thierry A."/>
            <person name="Bouchier C."/>
            <person name="Caudron B."/>
            <person name="Scarpelli C."/>
            <person name="Gaillardin C."/>
            <person name="Weissenbach J."/>
            <person name="Wincker P."/>
            <person name="Souciet J.-L."/>
        </authorList>
    </citation>
    <scope>NUCLEOTIDE SEQUENCE [LARGE SCALE GENOMIC DNA]</scope>
    <source>
        <strain>ATCC 8585 / CBS 2359 / DSM 70799 / NBRC 1267 / NRRL Y-1140 / WM37</strain>
    </source>
</reference>
<gene>
    <name type="primary">EFT1</name>
    <name type="ordered locus">KLLA0E02926g</name>
</gene>
<protein>
    <recommendedName>
        <fullName>Elongation factor 2</fullName>
        <shortName>EF-2</shortName>
        <ecNumber evidence="1">3.6.5.-</ecNumber>
    </recommendedName>
</protein>
<proteinExistence type="inferred from homology"/>
<keyword id="KW-0963">Cytoplasm</keyword>
<keyword id="KW-0251">Elongation factor</keyword>
<keyword id="KW-0342">GTP-binding</keyword>
<keyword id="KW-0378">Hydrolase</keyword>
<keyword id="KW-0547">Nucleotide-binding</keyword>
<keyword id="KW-0648">Protein biosynthesis</keyword>
<keyword id="KW-1185">Reference proteome</keyword>
<accession>Q6CPQ9</accession>
<dbReference type="EC" id="3.6.5.-" evidence="1"/>
<dbReference type="EMBL" id="CR382125">
    <property type="protein sequence ID" value="CAG99167.1"/>
    <property type="molecule type" value="Genomic_DNA"/>
</dbReference>
<dbReference type="RefSeq" id="XP_454080.1">
    <property type="nucleotide sequence ID" value="XM_454080.1"/>
</dbReference>
<dbReference type="SMR" id="Q6CPQ9"/>
<dbReference type="FunCoup" id="Q6CPQ9">
    <property type="interactions" value="1338"/>
</dbReference>
<dbReference type="STRING" id="284590.Q6CPQ9"/>
<dbReference type="PaxDb" id="284590-Q6CPQ9"/>
<dbReference type="KEGG" id="kla:KLLA0_E02993g"/>
<dbReference type="eggNOG" id="KOG0469">
    <property type="taxonomic scope" value="Eukaryota"/>
</dbReference>
<dbReference type="HOGENOM" id="CLU_002794_11_2_1"/>
<dbReference type="InParanoid" id="Q6CPQ9"/>
<dbReference type="OMA" id="ASWNTEN"/>
<dbReference type="Proteomes" id="UP000000598">
    <property type="component" value="Chromosome E"/>
</dbReference>
<dbReference type="GO" id="GO:0005829">
    <property type="term" value="C:cytosol"/>
    <property type="evidence" value="ECO:0007669"/>
    <property type="project" value="TreeGrafter"/>
</dbReference>
<dbReference type="GO" id="GO:1990904">
    <property type="term" value="C:ribonucleoprotein complex"/>
    <property type="evidence" value="ECO:0007669"/>
    <property type="project" value="TreeGrafter"/>
</dbReference>
<dbReference type="GO" id="GO:0005525">
    <property type="term" value="F:GTP binding"/>
    <property type="evidence" value="ECO:0007669"/>
    <property type="project" value="UniProtKB-KW"/>
</dbReference>
<dbReference type="GO" id="GO:0003924">
    <property type="term" value="F:GTPase activity"/>
    <property type="evidence" value="ECO:0007669"/>
    <property type="project" value="InterPro"/>
</dbReference>
<dbReference type="GO" id="GO:0043022">
    <property type="term" value="F:ribosome binding"/>
    <property type="evidence" value="ECO:0007669"/>
    <property type="project" value="TreeGrafter"/>
</dbReference>
<dbReference type="GO" id="GO:0003746">
    <property type="term" value="F:translation elongation factor activity"/>
    <property type="evidence" value="ECO:0007669"/>
    <property type="project" value="UniProtKB-KW"/>
</dbReference>
<dbReference type="CDD" id="cd01681">
    <property type="entry name" value="aeEF2_snRNP_like_IV"/>
    <property type="match status" value="1"/>
</dbReference>
<dbReference type="CDD" id="cd04096">
    <property type="entry name" value="eEF2_snRNP_like_C"/>
    <property type="match status" value="1"/>
</dbReference>
<dbReference type="CDD" id="cd01885">
    <property type="entry name" value="EF2"/>
    <property type="match status" value="1"/>
</dbReference>
<dbReference type="CDD" id="cd16261">
    <property type="entry name" value="EF2_snRNP_III"/>
    <property type="match status" value="1"/>
</dbReference>
<dbReference type="CDD" id="cd03700">
    <property type="entry name" value="EF2_snRNP_like_II"/>
    <property type="match status" value="1"/>
</dbReference>
<dbReference type="FunFam" id="2.40.30.10:FF:000010">
    <property type="entry name" value="Translation elongation factor 2"/>
    <property type="match status" value="1"/>
</dbReference>
<dbReference type="FunFam" id="3.30.230.10:FF:000006">
    <property type="entry name" value="Translation elongation factor 2"/>
    <property type="match status" value="1"/>
</dbReference>
<dbReference type="FunFam" id="3.30.70.240:FF:000003">
    <property type="entry name" value="Translation elongation factor 2"/>
    <property type="match status" value="1"/>
</dbReference>
<dbReference type="FunFam" id="3.30.70.870:FF:000002">
    <property type="entry name" value="Translation elongation factor 2"/>
    <property type="match status" value="1"/>
</dbReference>
<dbReference type="FunFam" id="3.40.50.300:FF:000058">
    <property type="entry name" value="Translation elongation factor 2"/>
    <property type="match status" value="1"/>
</dbReference>
<dbReference type="Gene3D" id="3.30.230.10">
    <property type="match status" value="1"/>
</dbReference>
<dbReference type="Gene3D" id="3.30.70.240">
    <property type="match status" value="1"/>
</dbReference>
<dbReference type="Gene3D" id="3.30.70.870">
    <property type="entry name" value="Elongation Factor G (Translational Gtpase), domain 3"/>
    <property type="match status" value="1"/>
</dbReference>
<dbReference type="Gene3D" id="3.40.50.300">
    <property type="entry name" value="P-loop containing nucleotide triphosphate hydrolases"/>
    <property type="match status" value="1"/>
</dbReference>
<dbReference type="Gene3D" id="2.40.30.10">
    <property type="entry name" value="Translation factors"/>
    <property type="match status" value="1"/>
</dbReference>
<dbReference type="InterPro" id="IPR041095">
    <property type="entry name" value="EFG_II"/>
</dbReference>
<dbReference type="InterPro" id="IPR035647">
    <property type="entry name" value="EFG_III/V"/>
</dbReference>
<dbReference type="InterPro" id="IPR000640">
    <property type="entry name" value="EFG_V-like"/>
</dbReference>
<dbReference type="InterPro" id="IPR004161">
    <property type="entry name" value="EFTu-like_2"/>
</dbReference>
<dbReference type="InterPro" id="IPR031157">
    <property type="entry name" value="G_TR_CS"/>
</dbReference>
<dbReference type="InterPro" id="IPR027417">
    <property type="entry name" value="P-loop_NTPase"/>
</dbReference>
<dbReference type="InterPro" id="IPR020568">
    <property type="entry name" value="Ribosomal_Su5_D2-typ_SF"/>
</dbReference>
<dbReference type="InterPro" id="IPR014721">
    <property type="entry name" value="Ribsml_uS5_D2-typ_fold_subgr"/>
</dbReference>
<dbReference type="InterPro" id="IPR005225">
    <property type="entry name" value="Small_GTP-bd"/>
</dbReference>
<dbReference type="InterPro" id="IPR000795">
    <property type="entry name" value="T_Tr_GTP-bd_dom"/>
</dbReference>
<dbReference type="InterPro" id="IPR009000">
    <property type="entry name" value="Transl_B-barrel_sf"/>
</dbReference>
<dbReference type="InterPro" id="IPR005517">
    <property type="entry name" value="Transl_elong_EFG/EF2_IV"/>
</dbReference>
<dbReference type="NCBIfam" id="TIGR00231">
    <property type="entry name" value="small_GTP"/>
    <property type="match status" value="1"/>
</dbReference>
<dbReference type="PANTHER" id="PTHR42908:SF10">
    <property type="entry name" value="EUKARYOTIC TRANSLATION ELONGATION FACTOR 2"/>
    <property type="match status" value="1"/>
</dbReference>
<dbReference type="PANTHER" id="PTHR42908">
    <property type="entry name" value="TRANSLATION ELONGATION FACTOR-RELATED"/>
    <property type="match status" value="1"/>
</dbReference>
<dbReference type="Pfam" id="PF00679">
    <property type="entry name" value="EFG_C"/>
    <property type="match status" value="1"/>
</dbReference>
<dbReference type="Pfam" id="PF14492">
    <property type="entry name" value="EFG_III"/>
    <property type="match status" value="1"/>
</dbReference>
<dbReference type="Pfam" id="PF03764">
    <property type="entry name" value="EFG_IV"/>
    <property type="match status" value="1"/>
</dbReference>
<dbReference type="Pfam" id="PF00009">
    <property type="entry name" value="GTP_EFTU"/>
    <property type="match status" value="1"/>
</dbReference>
<dbReference type="Pfam" id="PF03144">
    <property type="entry name" value="GTP_EFTU_D2"/>
    <property type="match status" value="1"/>
</dbReference>
<dbReference type="PRINTS" id="PR00315">
    <property type="entry name" value="ELONGATNFCT"/>
</dbReference>
<dbReference type="SMART" id="SM00838">
    <property type="entry name" value="EFG_C"/>
    <property type="match status" value="1"/>
</dbReference>
<dbReference type="SMART" id="SM00889">
    <property type="entry name" value="EFG_IV"/>
    <property type="match status" value="1"/>
</dbReference>
<dbReference type="SUPFAM" id="SSF54980">
    <property type="entry name" value="EF-G C-terminal domain-like"/>
    <property type="match status" value="2"/>
</dbReference>
<dbReference type="SUPFAM" id="SSF52540">
    <property type="entry name" value="P-loop containing nucleoside triphosphate hydrolases"/>
    <property type="match status" value="1"/>
</dbReference>
<dbReference type="SUPFAM" id="SSF54211">
    <property type="entry name" value="Ribosomal protein S5 domain 2-like"/>
    <property type="match status" value="1"/>
</dbReference>
<dbReference type="SUPFAM" id="SSF50447">
    <property type="entry name" value="Translation proteins"/>
    <property type="match status" value="1"/>
</dbReference>
<dbReference type="PROSITE" id="PS00301">
    <property type="entry name" value="G_TR_1"/>
    <property type="match status" value="1"/>
</dbReference>
<dbReference type="PROSITE" id="PS51722">
    <property type="entry name" value="G_TR_2"/>
    <property type="match status" value="1"/>
</dbReference>
<comment type="function">
    <text evidence="1">Catalyzes the GTP-dependent ribosomal translocation step during translation elongation. During this step, the ribosome changes from the pre-translocational (PRE) to the post-translocational (POST) state as the newly formed A-site-bound peptidyl-tRNA and P-site-bound deacylated tRNA move to the P and E sites, respectively. Catalyzes the coordinated movement of the two tRNA molecules, the mRNA and conformational changes in the ribosome.</text>
</comment>
<comment type="catalytic activity">
    <reaction evidence="1">
        <text>GTP + H2O = GDP + phosphate + H(+)</text>
        <dbReference type="Rhea" id="RHEA:19669"/>
        <dbReference type="ChEBI" id="CHEBI:15377"/>
        <dbReference type="ChEBI" id="CHEBI:15378"/>
        <dbReference type="ChEBI" id="CHEBI:37565"/>
        <dbReference type="ChEBI" id="CHEBI:43474"/>
        <dbReference type="ChEBI" id="CHEBI:58189"/>
    </reaction>
    <physiologicalReaction direction="left-to-right" evidence="1">
        <dbReference type="Rhea" id="RHEA:19670"/>
    </physiologicalReaction>
</comment>
<comment type="subcellular location">
    <subcellularLocation>
        <location evidence="1">Cytoplasm</location>
    </subcellularLocation>
</comment>
<comment type="similarity">
    <text evidence="2">Belongs to the TRAFAC class translation factor GTPase superfamily. Classic translation factor GTPase family. EF-G/EF-2 subfamily.</text>
</comment>
<evidence type="ECO:0000250" key="1">
    <source>
        <dbReference type="UniProtKB" id="P32324"/>
    </source>
</evidence>
<evidence type="ECO:0000255" key="2">
    <source>
        <dbReference type="PROSITE-ProRule" id="PRU01059"/>
    </source>
</evidence>
<name>EF2_KLULA</name>
<organism>
    <name type="scientific">Kluyveromyces lactis (strain ATCC 8585 / CBS 2359 / DSM 70799 / NBRC 1267 / NRRL Y-1140 / WM37)</name>
    <name type="common">Yeast</name>
    <name type="synonym">Candida sphaerica</name>
    <dbReference type="NCBI Taxonomy" id="284590"/>
    <lineage>
        <taxon>Eukaryota</taxon>
        <taxon>Fungi</taxon>
        <taxon>Dikarya</taxon>
        <taxon>Ascomycota</taxon>
        <taxon>Saccharomycotina</taxon>
        <taxon>Saccharomycetes</taxon>
        <taxon>Saccharomycetales</taxon>
        <taxon>Saccharomycetaceae</taxon>
        <taxon>Kluyveromyces</taxon>
    </lineage>
</organism>
<feature type="chain" id="PRO_0000091018" description="Elongation factor 2">
    <location>
        <begin position="1"/>
        <end position="842"/>
    </location>
</feature>
<feature type="domain" description="tr-type G" evidence="2">
    <location>
        <begin position="17"/>
        <end position="253"/>
    </location>
</feature>
<feature type="binding site" evidence="1">
    <location>
        <begin position="26"/>
        <end position="33"/>
    </location>
    <ligand>
        <name>GTP</name>
        <dbReference type="ChEBI" id="CHEBI:37565"/>
    </ligand>
</feature>
<feature type="binding site" evidence="1">
    <location>
        <begin position="158"/>
        <end position="161"/>
    </location>
    <ligand>
        <name>GTP</name>
        <dbReference type="ChEBI" id="CHEBI:37565"/>
    </ligand>
</feature>
<feature type="binding site" evidence="1">
    <location>
        <begin position="213"/>
        <end position="215"/>
    </location>
    <ligand>
        <name>GTP</name>
        <dbReference type="ChEBI" id="CHEBI:37565"/>
    </ligand>
</feature>
<feature type="modified residue" description="Diphthamide" evidence="1">
    <location>
        <position position="699"/>
    </location>
</feature>
<sequence>MVAFTVDQIRSLMDKVTNVRNMSVIAHVDHGKSTLTDSLVQRAGIISAAKAGEARFTDTRKDEQERGITIKSTAISLFSEMSDDDVKDIKQKTDGNAFLINLIDSPGHVDFSSEVTAALRVTDGALVVVDTVEGVCVQTETVLRQSLAERIKPVVVINKVDRALLELQVSKEDLYQSFSRTVESVNVIISTYADEVLGDVQVYPQRGTVAFGSGLHGWAFTVRQFANRYSKKFGVDREKMMDRLWGDSYFNPKTKKWTNKERDADGKPLERAFNMFVLDPIFRLFAAIMNFKKEEIPVLLEKLEINLKGDEKELEGKNLLKVVMRKFLPAADALLEMIILHLPSPVTAQNYRAEQLYEGPSDDPACIAIKNCDPKSDLMLYVSKMVPTSDKGRFYAFGRVFAGTVKSGQKVRIQGPNFIPGKKEDLFIKAIQRAVLMMGRFVEPIDDCPAGNIIGLVGIDQFLLKTGTLTTFEGAHNMKVMKFSVSPVVQVAVEVKNANDLPKLVEGLKRLSKSDPCVLVSMSESGEHIVAGTGELHLEICLQDLENDHAGIPLKISPPVVAYRETVEGESSQTALSKSPNKHNRIYLKAQPIDEEVSLAIEGGKINPRDDFKARARIMADEFGWDVTDARKIWCFGPDGNGPNLVVDQTKAVQYLNEIKDSVVAAFQWATKEGPIFGEQMRSVRVNILDVTLHADAIHRGGGQIIPTMRRATYAGFLLAEPKIQEPVFLVEIQCPEQAIGGIYSVLNKKRGQVVSEEQRPGTPLFTVKAYLPINESFGFTGELRQATGGQAFPQMVFDHWATLGTDPLDPSTKAGEIVLAARKRQGMKEEVPGWQEYYDKL</sequence>